<reference key="1">
    <citation type="journal article" date="2005" name="Genome Res.">
        <title>Comparative genome sequencing of Drosophila pseudoobscura: chromosomal, gene, and cis-element evolution.</title>
        <authorList>
            <person name="Richards S."/>
            <person name="Liu Y."/>
            <person name="Bettencourt B.R."/>
            <person name="Hradecky P."/>
            <person name="Letovsky S."/>
            <person name="Nielsen R."/>
            <person name="Thornton K."/>
            <person name="Hubisz M.J."/>
            <person name="Chen R."/>
            <person name="Meisel R.P."/>
            <person name="Couronne O."/>
            <person name="Hua S."/>
            <person name="Smith M.A."/>
            <person name="Zhang P."/>
            <person name="Liu J."/>
            <person name="Bussemaker H.J."/>
            <person name="van Batenburg M.F."/>
            <person name="Howells S.L."/>
            <person name="Scherer S.E."/>
            <person name="Sodergren E."/>
            <person name="Matthews B.B."/>
            <person name="Crosby M.A."/>
            <person name="Schroeder A.J."/>
            <person name="Ortiz-Barrientos D."/>
            <person name="Rives C.M."/>
            <person name="Metzker M.L."/>
            <person name="Muzny D.M."/>
            <person name="Scott G."/>
            <person name="Steffen D."/>
            <person name="Wheeler D.A."/>
            <person name="Worley K.C."/>
            <person name="Havlak P."/>
            <person name="Durbin K.J."/>
            <person name="Egan A."/>
            <person name="Gill R."/>
            <person name="Hume J."/>
            <person name="Morgan M.B."/>
            <person name="Miner G."/>
            <person name="Hamilton C."/>
            <person name="Huang Y."/>
            <person name="Waldron L."/>
            <person name="Verduzco D."/>
            <person name="Clerc-Blankenburg K.P."/>
            <person name="Dubchak I."/>
            <person name="Noor M.A.F."/>
            <person name="Anderson W."/>
            <person name="White K.P."/>
            <person name="Clark A.G."/>
            <person name="Schaeffer S.W."/>
            <person name="Gelbart W.M."/>
            <person name="Weinstock G.M."/>
            <person name="Gibbs R.A."/>
        </authorList>
    </citation>
    <scope>NUCLEOTIDE SEQUENCE [LARGE SCALE GENOMIC DNA]</scope>
    <source>
        <strain>MV2-25 / Tucson 14011-0121.94</strain>
    </source>
</reference>
<name>RM10_DROPS</name>
<proteinExistence type="inferred from homology"/>
<evidence type="ECO:0000250" key="1">
    <source>
        <dbReference type="UniProtKB" id="Q7Z7H8"/>
    </source>
</evidence>
<evidence type="ECO:0000255" key="2"/>
<evidence type="ECO:0000305" key="3"/>
<accession>Q29NV5</accession>
<keyword id="KW-0496">Mitochondrion</keyword>
<keyword id="KW-1185">Reference proteome</keyword>
<keyword id="KW-0687">Ribonucleoprotein</keyword>
<keyword id="KW-0689">Ribosomal protein</keyword>
<keyword id="KW-0809">Transit peptide</keyword>
<dbReference type="EMBL" id="CH379058">
    <property type="protein sequence ID" value="EAL34539.1"/>
    <property type="molecule type" value="Genomic_DNA"/>
</dbReference>
<dbReference type="RefSeq" id="XP_001357469.1">
    <property type="nucleotide sequence ID" value="XM_001357433.2"/>
</dbReference>
<dbReference type="RefSeq" id="XP_015035553.1">
    <property type="nucleotide sequence ID" value="XM_015180067.1"/>
</dbReference>
<dbReference type="SMR" id="Q29NV5"/>
<dbReference type="FunCoup" id="Q29NV5">
    <property type="interactions" value="792"/>
</dbReference>
<dbReference type="STRING" id="46245.Q29NV5"/>
<dbReference type="EnsemblMetazoa" id="FBtr0280460">
    <property type="protein sequence ID" value="FBpp0278898"/>
    <property type="gene ID" value="FBgn0071084"/>
</dbReference>
<dbReference type="EnsemblMetazoa" id="FBtr0374610">
    <property type="protein sequence ID" value="FBpp0336175"/>
    <property type="gene ID" value="FBgn0071084"/>
</dbReference>
<dbReference type="GeneID" id="4817857"/>
<dbReference type="KEGG" id="dpo:4817857"/>
<dbReference type="CTD" id="124995"/>
<dbReference type="eggNOG" id="KOG4241">
    <property type="taxonomic scope" value="Eukaryota"/>
</dbReference>
<dbReference type="HOGENOM" id="CLU_073093_1_0_1"/>
<dbReference type="InParanoid" id="Q29NV5"/>
<dbReference type="OMA" id="RENRMIA"/>
<dbReference type="PhylomeDB" id="Q29NV5"/>
<dbReference type="Proteomes" id="UP000001819">
    <property type="component" value="Chromosome 4"/>
</dbReference>
<dbReference type="Bgee" id="FBgn0071084">
    <property type="expression patterns" value="Expressed in female reproductive system and 2 other cell types or tissues"/>
</dbReference>
<dbReference type="ExpressionAtlas" id="Q29NV5">
    <property type="expression patterns" value="baseline"/>
</dbReference>
<dbReference type="GO" id="GO:0005762">
    <property type="term" value="C:mitochondrial large ribosomal subunit"/>
    <property type="evidence" value="ECO:0000250"/>
    <property type="project" value="UniProtKB"/>
</dbReference>
<dbReference type="GO" id="GO:1990904">
    <property type="term" value="C:ribonucleoprotein complex"/>
    <property type="evidence" value="ECO:0000250"/>
    <property type="project" value="UniProtKB"/>
</dbReference>
<dbReference type="GO" id="GO:0003735">
    <property type="term" value="F:structural constituent of ribosome"/>
    <property type="evidence" value="ECO:0000250"/>
    <property type="project" value="UniProtKB"/>
</dbReference>
<dbReference type="GO" id="GO:0006412">
    <property type="term" value="P:translation"/>
    <property type="evidence" value="ECO:0000250"/>
    <property type="project" value="UniProtKB"/>
</dbReference>
<dbReference type="CDD" id="cd05797">
    <property type="entry name" value="Ribosomal_L10"/>
    <property type="match status" value="1"/>
</dbReference>
<dbReference type="FunFam" id="3.30.70.1730:FF:000012">
    <property type="entry name" value="Mitochondrial Ribosomal Protein, Large"/>
    <property type="match status" value="1"/>
</dbReference>
<dbReference type="Gene3D" id="3.30.70.1730">
    <property type="match status" value="1"/>
</dbReference>
<dbReference type="InterPro" id="IPR001790">
    <property type="entry name" value="Ribosomal_uL10"/>
</dbReference>
<dbReference type="InterPro" id="IPR043141">
    <property type="entry name" value="Ribosomal_uL10-like_sf"/>
</dbReference>
<dbReference type="InterPro" id="IPR047865">
    <property type="entry name" value="Ribosomal_uL10_bac_type"/>
</dbReference>
<dbReference type="PANTHER" id="PTHR11560">
    <property type="entry name" value="39S RIBOSOMAL PROTEIN L10, MITOCHONDRIAL"/>
    <property type="match status" value="1"/>
</dbReference>
<dbReference type="Pfam" id="PF00466">
    <property type="entry name" value="Ribosomal_L10"/>
    <property type="match status" value="1"/>
</dbReference>
<dbReference type="SUPFAM" id="SSF160369">
    <property type="entry name" value="Ribosomal protein L10-like"/>
    <property type="match status" value="1"/>
</dbReference>
<organism>
    <name type="scientific">Drosophila pseudoobscura pseudoobscura</name>
    <name type="common">Fruit fly</name>
    <dbReference type="NCBI Taxonomy" id="46245"/>
    <lineage>
        <taxon>Eukaryota</taxon>
        <taxon>Metazoa</taxon>
        <taxon>Ecdysozoa</taxon>
        <taxon>Arthropoda</taxon>
        <taxon>Hexapoda</taxon>
        <taxon>Insecta</taxon>
        <taxon>Pterygota</taxon>
        <taxon>Neoptera</taxon>
        <taxon>Endopterygota</taxon>
        <taxon>Diptera</taxon>
        <taxon>Brachycera</taxon>
        <taxon>Muscomorpha</taxon>
        <taxon>Ephydroidea</taxon>
        <taxon>Drosophilidae</taxon>
        <taxon>Drosophila</taxon>
        <taxon>Sophophora</taxon>
    </lineage>
</organism>
<gene>
    <name type="primary">mRpL10</name>
    <name type="ORF">GA11028</name>
</gene>
<sequence length="253" mass="28807">MANLMQRSLPLTTTRTPVLQFLRFRGKINIQRPKEPHYERARVVAVTQPKYPELPKARSCFQTRAERTKEQLENPYNEIIAREVRNWLNHSQLVAIFHLNSITADEIFRVRVQLHKQNLHLKSYGRKIIDQAVTGTPYEAIMPLFHSNHCIVFSPNQQQIGALLKITRRVPQMVLLGGIVEKTLLSRNELMAYAQMPNLQGAQAQLVQTLNLAAGQLVQHLQTHQANLVQVLDVHAKGNGDTNTNTTETADES</sequence>
<protein>
    <recommendedName>
        <fullName evidence="3">Large ribosomal subunit protein uL10m</fullName>
    </recommendedName>
    <alternativeName>
        <fullName>39S ribosomal protein L10, mitochondrial</fullName>
        <shortName>L10mt</shortName>
        <shortName>MRP-L10</shortName>
    </alternativeName>
</protein>
<feature type="transit peptide" description="Mitochondrion" evidence="2">
    <location>
        <begin position="1"/>
        <end position="24"/>
    </location>
</feature>
<feature type="chain" id="PRO_0000273080" description="Large ribosomal subunit protein uL10m">
    <location>
        <begin position="25"/>
        <end position="253"/>
    </location>
</feature>
<comment type="subunit">
    <text evidence="1">Component of the mitochondrial ribosome large subunit (39S) which comprises a 16S rRNA and about 50 distinct proteins.</text>
</comment>
<comment type="subcellular location">
    <subcellularLocation>
        <location evidence="1">Mitochondrion</location>
    </subcellularLocation>
</comment>
<comment type="similarity">
    <text evidence="3">Belongs to the universal ribosomal protein uL10 family.</text>
</comment>